<sequence>MAGHSKWANIKHRKAAQDAQRGKIFTKLIRELVTAAKIGGGDVSANPRLRSAVDKALSNNMTRDTINRAIERGVGGGDDTNMETKIYEGYGPGGTAVMVECLSDNANRTISQVRPSFTKCGGNLGTEGSVGYLFSKKGLILIASGDEDALTEAAIEAGADDIQPQEDGSFEIYTAWEDLGSVRDGIEAAGFKIQEAEVTMIPSTTVELDAETAPKLLDLINRLEDCDDVQNVYHNGEISDEVAALL</sequence>
<accession>B3GY39</accession>
<organism>
    <name type="scientific">Actinobacillus pleuropneumoniae serotype 7 (strain AP76)</name>
    <dbReference type="NCBI Taxonomy" id="537457"/>
    <lineage>
        <taxon>Bacteria</taxon>
        <taxon>Pseudomonadati</taxon>
        <taxon>Pseudomonadota</taxon>
        <taxon>Gammaproteobacteria</taxon>
        <taxon>Pasteurellales</taxon>
        <taxon>Pasteurellaceae</taxon>
        <taxon>Actinobacillus</taxon>
    </lineage>
</organism>
<keyword id="KW-0963">Cytoplasm</keyword>
<keyword id="KW-0238">DNA-binding</keyword>
<keyword id="KW-0804">Transcription</keyword>
<keyword id="KW-0805">Transcription regulation</keyword>
<proteinExistence type="inferred from homology"/>
<comment type="subcellular location">
    <subcellularLocation>
        <location evidence="1">Cytoplasm</location>
    </subcellularLocation>
</comment>
<comment type="similarity">
    <text evidence="1">Belongs to the TACO1 family.</text>
</comment>
<name>Y1210_ACTP7</name>
<protein>
    <recommendedName>
        <fullName evidence="1">Probable transcriptional regulatory protein APP7_1210</fullName>
    </recommendedName>
</protein>
<feature type="chain" id="PRO_1000132143" description="Probable transcriptional regulatory protein APP7_1210">
    <location>
        <begin position="1"/>
        <end position="246"/>
    </location>
</feature>
<evidence type="ECO:0000255" key="1">
    <source>
        <dbReference type="HAMAP-Rule" id="MF_00693"/>
    </source>
</evidence>
<gene>
    <name type="ordered locus">APP7_1210</name>
</gene>
<reference key="1">
    <citation type="submission" date="2008-06" db="EMBL/GenBank/DDBJ databases">
        <title>Genome and proteome analysis of A. pleuropneumoniae serotype 7.</title>
        <authorList>
            <person name="Linke B."/>
            <person name="Buettner F."/>
            <person name="Martinez-Arias R."/>
            <person name="Goesmann A."/>
            <person name="Baltes N."/>
            <person name="Tegetmeyer H."/>
            <person name="Singh M."/>
            <person name="Gerlach G.F."/>
        </authorList>
    </citation>
    <scope>NUCLEOTIDE SEQUENCE [LARGE SCALE GENOMIC DNA]</scope>
    <source>
        <strain>AP76</strain>
    </source>
</reference>
<dbReference type="EMBL" id="CP001091">
    <property type="protein sequence ID" value="ACE61862.1"/>
    <property type="molecule type" value="Genomic_DNA"/>
</dbReference>
<dbReference type="RefSeq" id="WP_005601643.1">
    <property type="nucleotide sequence ID" value="NC_010939.1"/>
</dbReference>
<dbReference type="SMR" id="B3GY39"/>
<dbReference type="KEGG" id="apa:APP7_1210"/>
<dbReference type="HOGENOM" id="CLU_062974_2_2_6"/>
<dbReference type="Proteomes" id="UP000001226">
    <property type="component" value="Chromosome"/>
</dbReference>
<dbReference type="GO" id="GO:0005829">
    <property type="term" value="C:cytosol"/>
    <property type="evidence" value="ECO:0007669"/>
    <property type="project" value="TreeGrafter"/>
</dbReference>
<dbReference type="GO" id="GO:0003677">
    <property type="term" value="F:DNA binding"/>
    <property type="evidence" value="ECO:0007669"/>
    <property type="project" value="UniProtKB-UniRule"/>
</dbReference>
<dbReference type="GO" id="GO:0006355">
    <property type="term" value="P:regulation of DNA-templated transcription"/>
    <property type="evidence" value="ECO:0007669"/>
    <property type="project" value="UniProtKB-UniRule"/>
</dbReference>
<dbReference type="FunFam" id="1.10.10.200:FF:000001">
    <property type="entry name" value="Probable transcriptional regulatory protein YebC"/>
    <property type="match status" value="1"/>
</dbReference>
<dbReference type="FunFam" id="3.30.70.980:FF:000002">
    <property type="entry name" value="Probable transcriptional regulatory protein YebC"/>
    <property type="match status" value="1"/>
</dbReference>
<dbReference type="Gene3D" id="1.10.10.200">
    <property type="match status" value="1"/>
</dbReference>
<dbReference type="Gene3D" id="3.30.70.980">
    <property type="match status" value="2"/>
</dbReference>
<dbReference type="HAMAP" id="MF_00693">
    <property type="entry name" value="Transcrip_reg_TACO1"/>
    <property type="match status" value="1"/>
</dbReference>
<dbReference type="InterPro" id="IPR017856">
    <property type="entry name" value="Integrase-like_N"/>
</dbReference>
<dbReference type="InterPro" id="IPR048300">
    <property type="entry name" value="TACO1_YebC-like_2nd/3rd_dom"/>
</dbReference>
<dbReference type="InterPro" id="IPR049083">
    <property type="entry name" value="TACO1_YebC_N"/>
</dbReference>
<dbReference type="InterPro" id="IPR002876">
    <property type="entry name" value="Transcrip_reg_TACO1-like"/>
</dbReference>
<dbReference type="InterPro" id="IPR026564">
    <property type="entry name" value="Transcrip_reg_TACO1-like_dom3"/>
</dbReference>
<dbReference type="InterPro" id="IPR029072">
    <property type="entry name" value="YebC-like"/>
</dbReference>
<dbReference type="NCBIfam" id="NF001030">
    <property type="entry name" value="PRK00110.1"/>
    <property type="match status" value="1"/>
</dbReference>
<dbReference type="NCBIfam" id="NF009044">
    <property type="entry name" value="PRK12378.1"/>
    <property type="match status" value="1"/>
</dbReference>
<dbReference type="NCBIfam" id="TIGR01033">
    <property type="entry name" value="YebC/PmpR family DNA-binding transcriptional regulator"/>
    <property type="match status" value="1"/>
</dbReference>
<dbReference type="PANTHER" id="PTHR12532:SF6">
    <property type="entry name" value="TRANSCRIPTIONAL REGULATORY PROTEIN YEBC-RELATED"/>
    <property type="match status" value="1"/>
</dbReference>
<dbReference type="PANTHER" id="PTHR12532">
    <property type="entry name" value="TRANSLATIONAL ACTIVATOR OF CYTOCHROME C OXIDASE 1"/>
    <property type="match status" value="1"/>
</dbReference>
<dbReference type="Pfam" id="PF20772">
    <property type="entry name" value="TACO1_YebC_N"/>
    <property type="match status" value="1"/>
</dbReference>
<dbReference type="Pfam" id="PF01709">
    <property type="entry name" value="Transcrip_reg"/>
    <property type="match status" value="1"/>
</dbReference>
<dbReference type="SUPFAM" id="SSF75625">
    <property type="entry name" value="YebC-like"/>
    <property type="match status" value="1"/>
</dbReference>